<proteinExistence type="evidence at protein level"/>
<dbReference type="PIR" id="S39034">
    <property type="entry name" value="S39034"/>
</dbReference>
<dbReference type="SMR" id="P80275"/>
<dbReference type="GO" id="GO:0005576">
    <property type="term" value="C:extracellular region"/>
    <property type="evidence" value="ECO:0007669"/>
    <property type="project" value="UniProtKB-SubCell"/>
</dbReference>
<dbReference type="GO" id="GO:0008289">
    <property type="term" value="F:lipid binding"/>
    <property type="evidence" value="ECO:0007669"/>
    <property type="project" value="UniProtKB-KW"/>
</dbReference>
<dbReference type="GO" id="GO:0006869">
    <property type="term" value="P:lipid transport"/>
    <property type="evidence" value="ECO:0007669"/>
    <property type="project" value="InterPro"/>
</dbReference>
<dbReference type="Gene3D" id="1.10.110.10">
    <property type="entry name" value="Plant lipid-transfer and hydrophobic proteins"/>
    <property type="match status" value="1"/>
</dbReference>
<dbReference type="InterPro" id="IPR036312">
    <property type="entry name" value="Bifun_inhib/LTP/seed_sf"/>
</dbReference>
<dbReference type="InterPro" id="IPR000528">
    <property type="entry name" value="Plant_nsLTP"/>
</dbReference>
<dbReference type="PRINTS" id="PR00382">
    <property type="entry name" value="LIPIDTRNSFER"/>
</dbReference>
<dbReference type="SUPFAM" id="SSF47699">
    <property type="entry name" value="Bifunctional inhibitor/lipid-transfer protein/seed storage 2S albumin"/>
    <property type="match status" value="1"/>
</dbReference>
<sequence>AITCGQVSSALSSCLGYLKNGGAVPPGSSCGIKNLNSA</sequence>
<feature type="chain" id="PRO_0000153884" description="Non-specific lipid-transfer protein P1">
    <location>
        <begin position="1"/>
        <end position="38" status="greater than"/>
    </location>
</feature>
<feature type="non-terminal residue">
    <location>
        <position position="38"/>
    </location>
</feature>
<evidence type="ECO:0000305" key="1"/>
<keyword id="KW-0903">Direct protein sequencing</keyword>
<keyword id="KW-0446">Lipid-binding</keyword>
<keyword id="KW-0964">Secreted</keyword>
<keyword id="KW-0813">Transport</keyword>
<accession>P80275</accession>
<reference key="1">
    <citation type="journal article" date="1993" name="Eur. J. Biochem.">
        <title>Four 9-kDa proteins excreted by somatic embryos of grapevine are isoforms of lipid-transfer proteins.</title>
        <authorList>
            <person name="Coutos-Thevenot P."/>
            <person name="Jouenne T."/>
            <person name="Maes O."/>
            <person name="Guerbette F."/>
            <person name="Grosbois M."/>
            <person name="Le Caer J.-P."/>
            <person name="Boulay M."/>
            <person name="Deloire A."/>
            <person name="Kader J.-C."/>
            <person name="Guern J."/>
        </authorList>
    </citation>
    <scope>PROTEIN SEQUENCE</scope>
    <source>
        <strain>V.vinifera X Berlanchen cv. Rootstock 41B</strain>
    </source>
</reference>
<protein>
    <recommendedName>
        <fullName>Non-specific lipid-transfer protein P1</fullName>
        <shortName>LTP P1</shortName>
    </recommendedName>
</protein>
<organism>
    <name type="scientific">Vitis sp.</name>
    <name type="common">Grape</name>
    <dbReference type="NCBI Taxonomy" id="3604"/>
    <lineage>
        <taxon>Eukaryota</taxon>
        <taxon>Viridiplantae</taxon>
        <taxon>Streptophyta</taxon>
        <taxon>Embryophyta</taxon>
        <taxon>Tracheophyta</taxon>
        <taxon>Spermatophyta</taxon>
        <taxon>Magnoliopsida</taxon>
        <taxon>eudicotyledons</taxon>
        <taxon>Gunneridae</taxon>
        <taxon>Pentapetalae</taxon>
        <taxon>rosids</taxon>
        <taxon>Vitales</taxon>
        <taxon>Vitaceae</taxon>
        <taxon>Viteae</taxon>
        <taxon>Vitis</taxon>
    </lineage>
</organism>
<comment type="function">
    <text>Plant non-specific lipid-transfer proteins transfer phospholipids as well as galactolipids across membranes. May play a role in wax or cutin deposition in the cell walls of expanding epidermal cells and certain secretory tissues.</text>
</comment>
<comment type="subcellular location">
    <subcellularLocation>
        <location>Secreted</location>
    </subcellularLocation>
</comment>
<comment type="similarity">
    <text evidence="1">Belongs to the plant LTP family.</text>
</comment>
<name>NLTP1_VITSX</name>